<organism>
    <name type="scientific">Candida dubliniensis (strain CD36 / ATCC MYA-646 / CBS 7987 / NCPF 3949 / NRRL Y-17841)</name>
    <name type="common">Yeast</name>
    <dbReference type="NCBI Taxonomy" id="573826"/>
    <lineage>
        <taxon>Eukaryota</taxon>
        <taxon>Fungi</taxon>
        <taxon>Dikarya</taxon>
        <taxon>Ascomycota</taxon>
        <taxon>Saccharomycotina</taxon>
        <taxon>Pichiomycetes</taxon>
        <taxon>Debaryomycetaceae</taxon>
        <taxon>Candida/Lodderomyces clade</taxon>
        <taxon>Candida</taxon>
    </lineage>
</organism>
<gene>
    <name type="primary">AIM24</name>
    <name type="ORF">CD36_81070</name>
</gene>
<protein>
    <recommendedName>
        <fullName>Altered inheritance of mitochondria protein 24, mitochondrial</fullName>
    </recommendedName>
</protein>
<feature type="transit peptide" description="Mitochondrion" evidence="2">
    <location>
        <begin position="1"/>
        <end position="62"/>
    </location>
</feature>
<feature type="chain" id="PRO_0000399572" description="Altered inheritance of mitochondria protein 24, mitochondrial">
    <location>
        <begin position="63"/>
        <end position="487"/>
    </location>
</feature>
<sequence>MSSLNQYIRPVKSRLSYISFIRNISITQSSINSTIKDNESISKTTTIPENIQQAKELAGYRALEVPEFKVLGSTSNGGNSTSSSCSSSILSINVPPSVPIYIRRGSLLSIYGIQEISSIDSVRSQLQFPNFWQRLIYGGYISGYQKLISTTPFSLLISSKSRTIMNGGNSSTEKSFVNLILDGTTDWAILDKSALQVYTGNSLSITMHKLPKFISKKLSRSLKNNNNSSNKKLETGLFSWKKMGYTLLSGRGKIGLVGNGNNSGCSIYNINLNQDEEILINKNNLLAITVNGPYDLQNCIIKYQFPIINNSNNNNNNNNSNNMTKNIKESGNIVKPKLIEPTTWNLIILKIKNINNRIKKFFQFINKYTLNLKTTSYNYLSGNQEFIKIIGPRNLLLQSNINHNGFNFTTRRKQQQKSIWPTTTDTTNTTTTKVDNTSSTPKDYLNYVTIEPDKGAIFKSTSDFSETIETIEKKKKNKGKDINTTPI</sequence>
<name>AIM24_CANDC</name>
<proteinExistence type="inferred from homology"/>
<keyword id="KW-0496">Mitochondrion</keyword>
<keyword id="KW-0809">Transit peptide</keyword>
<dbReference type="EMBL" id="FM992690">
    <property type="protein sequence ID" value="CAX42636.1"/>
    <property type="molecule type" value="Genomic_DNA"/>
</dbReference>
<dbReference type="RefSeq" id="XP_002419053.1">
    <property type="nucleotide sequence ID" value="XM_002419008.1"/>
</dbReference>
<dbReference type="GeneID" id="8046995"/>
<dbReference type="KEGG" id="cdu:CD36_81070"/>
<dbReference type="CGD" id="CAL0000166511">
    <property type="gene designation" value="Cd36_81070"/>
</dbReference>
<dbReference type="VEuPathDB" id="FungiDB:CD36_81070"/>
<dbReference type="eggNOG" id="ENOG502RXC5">
    <property type="taxonomic scope" value="Eukaryota"/>
</dbReference>
<dbReference type="HOGENOM" id="CLU_040665_0_0_1"/>
<dbReference type="OrthoDB" id="5295771at2759"/>
<dbReference type="Proteomes" id="UP000002605">
    <property type="component" value="Chromosome 3"/>
</dbReference>
<dbReference type="GO" id="GO:0005743">
    <property type="term" value="C:mitochondrial inner membrane"/>
    <property type="evidence" value="ECO:0007669"/>
    <property type="project" value="TreeGrafter"/>
</dbReference>
<dbReference type="GO" id="GO:0007007">
    <property type="term" value="P:inner mitochondrial membrane organization"/>
    <property type="evidence" value="ECO:0007669"/>
    <property type="project" value="TreeGrafter"/>
</dbReference>
<dbReference type="Gene3D" id="3.60.160.10">
    <property type="entry name" value="Mitochondrial biogenesis AIM24"/>
    <property type="match status" value="1"/>
</dbReference>
<dbReference type="InterPro" id="IPR002838">
    <property type="entry name" value="AIM24"/>
</dbReference>
<dbReference type="InterPro" id="IPR036983">
    <property type="entry name" value="AIM24_sf"/>
</dbReference>
<dbReference type="PANTHER" id="PTHR36959">
    <property type="entry name" value="ALTERED INHERITANCE OF MITOCHONDRIA PROTEIN 24, MITOCHONDRIAL"/>
    <property type="match status" value="1"/>
</dbReference>
<dbReference type="PANTHER" id="PTHR36959:SF2">
    <property type="entry name" value="ALTERED INHERITANCE OF MITOCHONDRIA PROTEIN 24, MITOCHONDRIAL"/>
    <property type="match status" value="1"/>
</dbReference>
<dbReference type="Pfam" id="PF01987">
    <property type="entry name" value="AIM24"/>
    <property type="match status" value="1"/>
</dbReference>
<reference key="1">
    <citation type="journal article" date="2009" name="Genome Res.">
        <title>Comparative genomics of the fungal pathogens Candida dubliniensis and Candida albicans.</title>
        <authorList>
            <person name="Jackson A.P."/>
            <person name="Gamble J.A."/>
            <person name="Yeomans T."/>
            <person name="Moran G.P."/>
            <person name="Saunders D."/>
            <person name="Harris D."/>
            <person name="Aslett M."/>
            <person name="Barrell J.F."/>
            <person name="Butler G."/>
            <person name="Citiulo F."/>
            <person name="Coleman D.C."/>
            <person name="de Groot P.W.J."/>
            <person name="Goodwin T.J."/>
            <person name="Quail M.A."/>
            <person name="McQuillan J."/>
            <person name="Munro C.A."/>
            <person name="Pain A."/>
            <person name="Poulter R.T."/>
            <person name="Rajandream M.A."/>
            <person name="Renauld H."/>
            <person name="Spiering M.J."/>
            <person name="Tivey A."/>
            <person name="Gow N.A.R."/>
            <person name="Barrell B."/>
            <person name="Sullivan D.J."/>
            <person name="Berriman M."/>
        </authorList>
    </citation>
    <scope>NUCLEOTIDE SEQUENCE [LARGE SCALE GENOMIC DNA]</scope>
    <source>
        <strain>CD36 / ATCC MYA-646 / CBS 7987 / NCPF 3949 / NRRL Y-17841</strain>
    </source>
</reference>
<evidence type="ECO:0000250" key="1"/>
<evidence type="ECO:0000255" key="2"/>
<evidence type="ECO:0000305" key="3"/>
<comment type="subcellular location">
    <subcellularLocation>
        <location evidence="1">Mitochondrion</location>
    </subcellularLocation>
</comment>
<comment type="similarity">
    <text evidence="3">Belongs to the AIM24 family.</text>
</comment>
<accession>B9WD86</accession>